<keyword id="KW-1035">Host cytoplasm</keyword>
<keyword id="KW-1185">Reference proteome</keyword>
<keyword id="KW-0946">Virion</keyword>
<gene>
    <name type="primary">vif</name>
</gene>
<name>VIF_CAEVC</name>
<organism>
    <name type="scientific">Caprine arthritis encephalitis virus (strain Cork)</name>
    <name type="common">CAEV-Co</name>
    <dbReference type="NCBI Taxonomy" id="11661"/>
    <lineage>
        <taxon>Viruses</taxon>
        <taxon>Riboviria</taxon>
        <taxon>Pararnavirae</taxon>
        <taxon>Artverviricota</taxon>
        <taxon>Revtraviricetes</taxon>
        <taxon>Ortervirales</taxon>
        <taxon>Retroviridae</taxon>
        <taxon>Orthoretrovirinae</taxon>
        <taxon>Lentivirus</taxon>
        <taxon>Caprine arthritis encephalitis virus</taxon>
    </lineage>
</organism>
<proteinExistence type="inferred from homology"/>
<evidence type="ECO:0000250" key="1"/>
<protein>
    <recommendedName>
        <fullName>Virion infectivity factor</fullName>
    </recommendedName>
    <alternativeName>
        <fullName>Q protein</fullName>
    </alternativeName>
    <alternativeName>
        <fullName>SOR protein</fullName>
    </alternativeName>
</protein>
<organismHost>
    <name type="scientific">Capra hircus</name>
    <name type="common">Goat</name>
    <dbReference type="NCBI Taxonomy" id="9925"/>
</organismHost>
<dbReference type="EMBL" id="M33677">
    <property type="protein sequence ID" value="AAA91827.1"/>
    <property type="molecule type" value="Genomic_RNA"/>
</dbReference>
<dbReference type="PIR" id="C45345">
    <property type="entry name" value="C45345"/>
</dbReference>
<dbReference type="RefSeq" id="NP_040940.1">
    <property type="nucleotide sequence ID" value="NC_001463.1"/>
</dbReference>
<dbReference type="SMR" id="P33462"/>
<dbReference type="KEGG" id="vg:1724700"/>
<dbReference type="Proteomes" id="UP000203242">
    <property type="component" value="Segment"/>
</dbReference>
<dbReference type="GO" id="GO:0030430">
    <property type="term" value="C:host cell cytoplasm"/>
    <property type="evidence" value="ECO:0007669"/>
    <property type="project" value="UniProtKB-SubCell"/>
</dbReference>
<dbReference type="GO" id="GO:0044423">
    <property type="term" value="C:virion component"/>
    <property type="evidence" value="ECO:0007669"/>
    <property type="project" value="UniProtKB-KW"/>
</dbReference>
<dbReference type="InterPro" id="IPR009979">
    <property type="entry name" value="Lenti_VIF_2"/>
</dbReference>
<dbReference type="Pfam" id="PF07401">
    <property type="entry name" value="Lenti_VIF_2"/>
    <property type="match status" value="1"/>
</dbReference>
<comment type="function">
    <text>Determines virus infectivity.</text>
</comment>
<comment type="subcellular location">
    <subcellularLocation>
        <location evidence="1">Host cytoplasm</location>
    </subcellularLocation>
    <subcellularLocation>
        <location evidence="1">Virion</location>
    </subcellularLocation>
</comment>
<accession>P33462</accession>
<sequence>MQNSSRHQQKKRNKKPGPELPLALWIHIAESINGDSSWYITMRLQQMMWGKRGNKLQYKNEDREYENWEITSWGWKMHLRRVKQWIQDNRRGSPWQYKVGGTWKSIGVWFLQAGDYRKVDRHFWWAWRILICSCRKEKFDIREFMRGRHRWDLCKSCAQGEVVKHTRTKSLERLVLLQMVEQHVFQVLPLWRARRSSTTDFPWCRDTTGYTHAWSVQECWLMEYLLEDE</sequence>
<feature type="chain" id="PRO_0000085499" description="Virion infectivity factor">
    <location>
        <begin position="1"/>
        <end position="229"/>
    </location>
</feature>
<reference key="1">
    <citation type="journal article" date="1990" name="Virology">
        <title>Nucleotide sequence and transcriptional analysis of molecular clones of CAEV which generate infectious virus.</title>
        <authorList>
            <person name="Saltarelli M."/>
            <person name="Querat G."/>
            <person name="Konings D.A.M."/>
            <person name="Vigne R."/>
            <person name="Clements J.E."/>
        </authorList>
    </citation>
    <scope>NUCLEOTIDE SEQUENCE [GENOMIC RNA]</scope>
</reference>